<protein>
    <recommendedName>
        <fullName evidence="1">Phosphate import ATP-binding protein PstB 1</fullName>
        <ecNumber evidence="1">7.3.2.1</ecNumber>
    </recommendedName>
    <alternativeName>
        <fullName evidence="1">ABC phosphate transporter 1</fullName>
    </alternativeName>
    <alternativeName>
        <fullName evidence="1">Phosphate-transporting ATPase 1</fullName>
    </alternativeName>
</protein>
<accession>Q71WT3</accession>
<comment type="function">
    <text evidence="1">Part of the ABC transporter complex PstSACB involved in phosphate import. Responsible for energy coupling to the transport system.</text>
</comment>
<comment type="catalytic activity">
    <reaction evidence="1">
        <text>phosphate(out) + ATP + H2O = ADP + 2 phosphate(in) + H(+)</text>
        <dbReference type="Rhea" id="RHEA:24440"/>
        <dbReference type="ChEBI" id="CHEBI:15377"/>
        <dbReference type="ChEBI" id="CHEBI:15378"/>
        <dbReference type="ChEBI" id="CHEBI:30616"/>
        <dbReference type="ChEBI" id="CHEBI:43474"/>
        <dbReference type="ChEBI" id="CHEBI:456216"/>
        <dbReference type="EC" id="7.3.2.1"/>
    </reaction>
</comment>
<comment type="subunit">
    <text evidence="1">The complex is composed of two ATP-binding proteins (PstB), two transmembrane proteins (PstC and PstA) and a solute-binding protein (PstS).</text>
</comment>
<comment type="subcellular location">
    <subcellularLocation>
        <location evidence="1">Cell membrane</location>
        <topology evidence="1">Peripheral membrane protein</topology>
    </subcellularLocation>
</comment>
<comment type="similarity">
    <text evidence="1">Belongs to the ABC transporter superfamily. Phosphate importer (TC 3.A.1.7) family.</text>
</comment>
<organism>
    <name type="scientific">Listeria monocytogenes serotype 4b (strain F2365)</name>
    <dbReference type="NCBI Taxonomy" id="265669"/>
    <lineage>
        <taxon>Bacteria</taxon>
        <taxon>Bacillati</taxon>
        <taxon>Bacillota</taxon>
        <taxon>Bacilli</taxon>
        <taxon>Bacillales</taxon>
        <taxon>Listeriaceae</taxon>
        <taxon>Listeria</taxon>
    </lineage>
</organism>
<keyword id="KW-0067">ATP-binding</keyword>
<keyword id="KW-1003">Cell membrane</keyword>
<keyword id="KW-0472">Membrane</keyword>
<keyword id="KW-0547">Nucleotide-binding</keyword>
<keyword id="KW-0592">Phosphate transport</keyword>
<keyword id="KW-1278">Translocase</keyword>
<keyword id="KW-0813">Transport</keyword>
<dbReference type="EC" id="7.3.2.1" evidence="1"/>
<dbReference type="EMBL" id="AE017262">
    <property type="protein sequence ID" value="AAT05233.1"/>
    <property type="molecule type" value="Genomic_DNA"/>
</dbReference>
<dbReference type="SMR" id="Q71WT3"/>
<dbReference type="KEGG" id="lmf:LMOf2365_2468"/>
<dbReference type="HOGENOM" id="CLU_000604_1_22_9"/>
<dbReference type="GO" id="GO:0005886">
    <property type="term" value="C:plasma membrane"/>
    <property type="evidence" value="ECO:0007669"/>
    <property type="project" value="UniProtKB-SubCell"/>
</dbReference>
<dbReference type="GO" id="GO:0005524">
    <property type="term" value="F:ATP binding"/>
    <property type="evidence" value="ECO:0007669"/>
    <property type="project" value="UniProtKB-KW"/>
</dbReference>
<dbReference type="GO" id="GO:0016887">
    <property type="term" value="F:ATP hydrolysis activity"/>
    <property type="evidence" value="ECO:0007669"/>
    <property type="project" value="InterPro"/>
</dbReference>
<dbReference type="GO" id="GO:0015415">
    <property type="term" value="F:ATPase-coupled phosphate ion transmembrane transporter activity"/>
    <property type="evidence" value="ECO:0007669"/>
    <property type="project" value="UniProtKB-EC"/>
</dbReference>
<dbReference type="GO" id="GO:0035435">
    <property type="term" value="P:phosphate ion transmembrane transport"/>
    <property type="evidence" value="ECO:0007669"/>
    <property type="project" value="InterPro"/>
</dbReference>
<dbReference type="CDD" id="cd03260">
    <property type="entry name" value="ABC_PstB_phosphate_transporter"/>
    <property type="match status" value="1"/>
</dbReference>
<dbReference type="FunFam" id="3.40.50.300:FF:000132">
    <property type="entry name" value="Phosphate import ATP-binding protein PstB"/>
    <property type="match status" value="1"/>
</dbReference>
<dbReference type="Gene3D" id="3.40.50.300">
    <property type="entry name" value="P-loop containing nucleotide triphosphate hydrolases"/>
    <property type="match status" value="1"/>
</dbReference>
<dbReference type="InterPro" id="IPR003593">
    <property type="entry name" value="AAA+_ATPase"/>
</dbReference>
<dbReference type="InterPro" id="IPR003439">
    <property type="entry name" value="ABC_transporter-like_ATP-bd"/>
</dbReference>
<dbReference type="InterPro" id="IPR017871">
    <property type="entry name" value="ABC_transporter-like_CS"/>
</dbReference>
<dbReference type="InterPro" id="IPR027417">
    <property type="entry name" value="P-loop_NTPase"/>
</dbReference>
<dbReference type="InterPro" id="IPR005670">
    <property type="entry name" value="PstB-like"/>
</dbReference>
<dbReference type="NCBIfam" id="TIGR00972">
    <property type="entry name" value="3a0107s01c2"/>
    <property type="match status" value="1"/>
</dbReference>
<dbReference type="PANTHER" id="PTHR43423">
    <property type="entry name" value="ABC TRANSPORTER I FAMILY MEMBER 17"/>
    <property type="match status" value="1"/>
</dbReference>
<dbReference type="PANTHER" id="PTHR43423:SF1">
    <property type="entry name" value="ABC TRANSPORTER I FAMILY MEMBER 17"/>
    <property type="match status" value="1"/>
</dbReference>
<dbReference type="Pfam" id="PF00005">
    <property type="entry name" value="ABC_tran"/>
    <property type="match status" value="1"/>
</dbReference>
<dbReference type="SMART" id="SM00382">
    <property type="entry name" value="AAA"/>
    <property type="match status" value="1"/>
</dbReference>
<dbReference type="SUPFAM" id="SSF52540">
    <property type="entry name" value="P-loop containing nucleoside triphosphate hydrolases"/>
    <property type="match status" value="1"/>
</dbReference>
<dbReference type="PROSITE" id="PS00211">
    <property type="entry name" value="ABC_TRANSPORTER_1"/>
    <property type="match status" value="1"/>
</dbReference>
<dbReference type="PROSITE" id="PS50893">
    <property type="entry name" value="ABC_TRANSPORTER_2"/>
    <property type="match status" value="1"/>
</dbReference>
<dbReference type="PROSITE" id="PS51238">
    <property type="entry name" value="PSTB"/>
    <property type="match status" value="1"/>
</dbReference>
<sequence>MTTETAEKVEYIIETKDVDLFYGSKQALQKIALNIKKNQVTALIGPSGCGKSTFLRTLNRMNDLIPNVKTTGEIHIGGENVQDPKIDMVNLRKKVGMVFQQANPFPFSIYDNVAYGPRMHGIKDKKVLDEIVERSLRQAALWEEVHDRLDRSAIGMSGGQQQRLCIARVLAVKPDVILMDEPTSALDPISTAKVEDLILELKKDYTIVIVTHNMQQASRISDETAFFLNGRIVEFADTTSIFTNPAEKETEDYISGRFG</sequence>
<gene>
    <name evidence="1" type="primary">pstB1</name>
    <name type="ordered locus">LMOf2365_2468</name>
</gene>
<reference key="1">
    <citation type="journal article" date="2004" name="Nucleic Acids Res.">
        <title>Whole genome comparisons of serotype 4b and 1/2a strains of the food-borne pathogen Listeria monocytogenes reveal new insights into the core genome components of this species.</title>
        <authorList>
            <person name="Nelson K.E."/>
            <person name="Fouts D.E."/>
            <person name="Mongodin E.F."/>
            <person name="Ravel J."/>
            <person name="DeBoy R.T."/>
            <person name="Kolonay J.F."/>
            <person name="Rasko D.A."/>
            <person name="Angiuoli S.V."/>
            <person name="Gill S.R."/>
            <person name="Paulsen I.T."/>
            <person name="Peterson J.D."/>
            <person name="White O."/>
            <person name="Nelson W.C."/>
            <person name="Nierman W.C."/>
            <person name="Beanan M.J."/>
            <person name="Brinkac L.M."/>
            <person name="Daugherty S.C."/>
            <person name="Dodson R.J."/>
            <person name="Durkin A.S."/>
            <person name="Madupu R."/>
            <person name="Haft D.H."/>
            <person name="Selengut J."/>
            <person name="Van Aken S.E."/>
            <person name="Khouri H.M."/>
            <person name="Fedorova N."/>
            <person name="Forberger H.A."/>
            <person name="Tran B."/>
            <person name="Kathariou S."/>
            <person name="Wonderling L.D."/>
            <person name="Uhlich G.A."/>
            <person name="Bayles D.O."/>
            <person name="Luchansky J.B."/>
            <person name="Fraser C.M."/>
        </authorList>
    </citation>
    <scope>NUCLEOTIDE SEQUENCE [LARGE SCALE GENOMIC DNA]</scope>
    <source>
        <strain>F2365</strain>
    </source>
</reference>
<proteinExistence type="inferred from homology"/>
<name>PSTB1_LISMF</name>
<feature type="chain" id="PRO_0000092831" description="Phosphate import ATP-binding protein PstB 1">
    <location>
        <begin position="1"/>
        <end position="259"/>
    </location>
</feature>
<feature type="domain" description="ABC transporter" evidence="1">
    <location>
        <begin position="13"/>
        <end position="254"/>
    </location>
</feature>
<feature type="binding site" evidence="1">
    <location>
        <begin position="45"/>
        <end position="52"/>
    </location>
    <ligand>
        <name>ATP</name>
        <dbReference type="ChEBI" id="CHEBI:30616"/>
    </ligand>
</feature>
<evidence type="ECO:0000255" key="1">
    <source>
        <dbReference type="HAMAP-Rule" id="MF_01702"/>
    </source>
</evidence>